<organism>
    <name type="scientific">Mannheimia succiniciproducens (strain KCTC 0769BP / MBEL55E)</name>
    <dbReference type="NCBI Taxonomy" id="221988"/>
    <lineage>
        <taxon>Bacteria</taxon>
        <taxon>Pseudomonadati</taxon>
        <taxon>Pseudomonadota</taxon>
        <taxon>Gammaproteobacteria</taxon>
        <taxon>Pasteurellales</taxon>
        <taxon>Pasteurellaceae</taxon>
        <taxon>Basfia</taxon>
    </lineage>
</organism>
<proteinExistence type="inferred from homology"/>
<feature type="chain" id="PRO_0000413927" description="Negative modulator of initiation of replication">
    <location>
        <begin position="1"/>
        <end position="215"/>
    </location>
</feature>
<feature type="region of interest" description="Disordered" evidence="2">
    <location>
        <begin position="71"/>
        <end position="93"/>
    </location>
</feature>
<feature type="region of interest" description="Interaction with DNA" evidence="1">
    <location>
        <begin position="181"/>
        <end position="187"/>
    </location>
</feature>
<sequence length="215" mass="24428">MKIIEVDEELYQYIASQTKSIGESASDILRRLLNLPVSGVNLTAVDLTQSTMNSTNEEKGTQLPAEKNVVAETPKPSSEQEIRTPARKQSTQSIQHIVTKVKNLLQSEAFQEESKMVVRFLNILSVLYRTNPESFAQATEQETSQGRTRTYYARDEATLLAAGNHTKPRQIPDTPYWVITNTNSGRKMLMLERTMQFMELPEELIDEVRPYFAVV</sequence>
<reference key="1">
    <citation type="journal article" date="2004" name="Nat. Biotechnol.">
        <title>The genome sequence of the capnophilic rumen bacterium Mannheimia succiniciproducens.</title>
        <authorList>
            <person name="Hong S.H."/>
            <person name="Kim J.S."/>
            <person name="Lee S.Y."/>
            <person name="In Y.H."/>
            <person name="Choi S.S."/>
            <person name="Rih J.-K."/>
            <person name="Kim C.H."/>
            <person name="Jeong H."/>
            <person name="Hur C.G."/>
            <person name="Kim J.J."/>
        </authorList>
    </citation>
    <scope>NUCLEOTIDE SEQUENCE [LARGE SCALE GENOMIC DNA]</scope>
    <source>
        <strain>KCTC 0769BP / MBEL55E</strain>
    </source>
</reference>
<comment type="function">
    <text evidence="1">Negative regulator of replication initiation, which contributes to regulation of DNA replication and ensures that replication initiation occurs exactly once per chromosome per cell cycle. Binds to pairs of hemimethylated GATC sequences in the oriC region, thus preventing assembly of replication proteins and re-initiation at newly replicated origins. Repression is relieved when the region becomes fully methylated.</text>
</comment>
<comment type="subunit">
    <text evidence="1">Homodimer. Polymerizes to form helical filaments.</text>
</comment>
<comment type="subcellular location">
    <subcellularLocation>
        <location evidence="1">Cytoplasm</location>
    </subcellularLocation>
</comment>
<comment type="similarity">
    <text evidence="1">Belongs to the SeqA family.</text>
</comment>
<comment type="sequence caution" evidence="3">
    <conflict type="erroneous initiation">
        <sequence resource="EMBL-CDS" id="AAU37470"/>
    </conflict>
    <text>Extended N-terminus.</text>
</comment>
<name>SEQA_MANSM</name>
<dbReference type="EMBL" id="AE016827">
    <property type="protein sequence ID" value="AAU37470.1"/>
    <property type="status" value="ALT_INIT"/>
    <property type="molecule type" value="Genomic_DNA"/>
</dbReference>
<dbReference type="RefSeq" id="WP_011200041.1">
    <property type="nucleotide sequence ID" value="NC_006300.1"/>
</dbReference>
<dbReference type="SMR" id="Q65U90"/>
<dbReference type="STRING" id="221988.MS0863"/>
<dbReference type="KEGG" id="msu:MS0863"/>
<dbReference type="eggNOG" id="COG3057">
    <property type="taxonomic scope" value="Bacteria"/>
</dbReference>
<dbReference type="HOGENOM" id="CLU_099733_0_0_6"/>
<dbReference type="OrthoDB" id="5591069at2"/>
<dbReference type="Proteomes" id="UP000000607">
    <property type="component" value="Chromosome"/>
</dbReference>
<dbReference type="GO" id="GO:0005737">
    <property type="term" value="C:cytoplasm"/>
    <property type="evidence" value="ECO:0007669"/>
    <property type="project" value="UniProtKB-SubCell"/>
</dbReference>
<dbReference type="GO" id="GO:0003677">
    <property type="term" value="F:DNA binding"/>
    <property type="evidence" value="ECO:0007669"/>
    <property type="project" value="UniProtKB-UniRule"/>
</dbReference>
<dbReference type="GO" id="GO:0032297">
    <property type="term" value="P:negative regulation of DNA-templated DNA replication initiation"/>
    <property type="evidence" value="ECO:0007669"/>
    <property type="project" value="UniProtKB-UniRule"/>
</dbReference>
<dbReference type="GO" id="GO:0006355">
    <property type="term" value="P:regulation of DNA-templated transcription"/>
    <property type="evidence" value="ECO:0007669"/>
    <property type="project" value="InterPro"/>
</dbReference>
<dbReference type="Gene3D" id="1.10.1220.10">
    <property type="entry name" value="Met repressor-like"/>
    <property type="match status" value="1"/>
</dbReference>
<dbReference type="Gene3D" id="1.20.1380.10">
    <property type="entry name" value="Replication modulator SeqA, C-terminal DNA-binding domain"/>
    <property type="match status" value="1"/>
</dbReference>
<dbReference type="HAMAP" id="MF_00908">
    <property type="entry name" value="SeqA"/>
    <property type="match status" value="1"/>
</dbReference>
<dbReference type="InterPro" id="IPR013321">
    <property type="entry name" value="Arc_rbn_hlx_hlx"/>
</dbReference>
<dbReference type="InterPro" id="IPR010985">
    <property type="entry name" value="Ribbon_hlx_hlx"/>
</dbReference>
<dbReference type="InterPro" id="IPR005621">
    <property type="entry name" value="SeqA"/>
</dbReference>
<dbReference type="InterPro" id="IPR026577">
    <property type="entry name" value="SeqA_DNA-bd_C"/>
</dbReference>
<dbReference type="InterPro" id="IPR036835">
    <property type="entry name" value="SeqA_DNA-bd_C_sf"/>
</dbReference>
<dbReference type="InterPro" id="IPR033761">
    <property type="entry name" value="SeqA_N"/>
</dbReference>
<dbReference type="NCBIfam" id="NF008389">
    <property type="entry name" value="PRK11187.1"/>
    <property type="match status" value="1"/>
</dbReference>
<dbReference type="Pfam" id="PF03925">
    <property type="entry name" value="SeqA"/>
    <property type="match status" value="1"/>
</dbReference>
<dbReference type="Pfam" id="PF17206">
    <property type="entry name" value="SeqA_N"/>
    <property type="match status" value="1"/>
</dbReference>
<dbReference type="PIRSF" id="PIRSF019401">
    <property type="entry name" value="SeqA"/>
    <property type="match status" value="1"/>
</dbReference>
<dbReference type="SUPFAM" id="SSF82808">
    <property type="entry name" value="Replication modulator SeqA, C-terminal DNA-binding domain"/>
    <property type="match status" value="1"/>
</dbReference>
<dbReference type="SUPFAM" id="SSF47598">
    <property type="entry name" value="Ribbon-helix-helix"/>
    <property type="match status" value="1"/>
</dbReference>
<keyword id="KW-0963">Cytoplasm</keyword>
<keyword id="KW-0236">DNA replication inhibitor</keyword>
<keyword id="KW-0238">DNA-binding</keyword>
<protein>
    <recommendedName>
        <fullName evidence="1">Negative modulator of initiation of replication</fullName>
    </recommendedName>
</protein>
<gene>
    <name evidence="1" type="primary">seqA</name>
    <name type="ordered locus">MS0863</name>
</gene>
<evidence type="ECO:0000255" key="1">
    <source>
        <dbReference type="HAMAP-Rule" id="MF_00908"/>
    </source>
</evidence>
<evidence type="ECO:0000256" key="2">
    <source>
        <dbReference type="SAM" id="MobiDB-lite"/>
    </source>
</evidence>
<evidence type="ECO:0000305" key="3"/>
<accession>Q65U90</accession>